<feature type="chain" id="PRO_1000004137" description="Large ribosomal subunit protein bL33">
    <location>
        <begin position="1"/>
        <end position="55"/>
    </location>
</feature>
<dbReference type="EMBL" id="CP000644">
    <property type="protein sequence ID" value="ABO92155.1"/>
    <property type="molecule type" value="Genomic_DNA"/>
</dbReference>
<dbReference type="RefSeq" id="WP_005307500.1">
    <property type="nucleotide sequence ID" value="NC_009348.1"/>
</dbReference>
<dbReference type="SMR" id="A4STD3"/>
<dbReference type="STRING" id="29491.GCA_000820065_04486"/>
<dbReference type="GeneID" id="92809802"/>
<dbReference type="KEGG" id="asa:ASA_4227"/>
<dbReference type="eggNOG" id="COG0267">
    <property type="taxonomic scope" value="Bacteria"/>
</dbReference>
<dbReference type="HOGENOM" id="CLU_190949_1_1_6"/>
<dbReference type="Proteomes" id="UP000000225">
    <property type="component" value="Chromosome"/>
</dbReference>
<dbReference type="GO" id="GO:0022625">
    <property type="term" value="C:cytosolic large ribosomal subunit"/>
    <property type="evidence" value="ECO:0007669"/>
    <property type="project" value="TreeGrafter"/>
</dbReference>
<dbReference type="GO" id="GO:0003735">
    <property type="term" value="F:structural constituent of ribosome"/>
    <property type="evidence" value="ECO:0007669"/>
    <property type="project" value="InterPro"/>
</dbReference>
<dbReference type="GO" id="GO:0006412">
    <property type="term" value="P:translation"/>
    <property type="evidence" value="ECO:0007669"/>
    <property type="project" value="UniProtKB-UniRule"/>
</dbReference>
<dbReference type="FunFam" id="2.20.28.120:FF:000001">
    <property type="entry name" value="50S ribosomal protein L33"/>
    <property type="match status" value="1"/>
</dbReference>
<dbReference type="Gene3D" id="2.20.28.120">
    <property type="entry name" value="Ribosomal protein L33"/>
    <property type="match status" value="1"/>
</dbReference>
<dbReference type="HAMAP" id="MF_00294">
    <property type="entry name" value="Ribosomal_bL33"/>
    <property type="match status" value="1"/>
</dbReference>
<dbReference type="InterPro" id="IPR001705">
    <property type="entry name" value="Ribosomal_bL33"/>
</dbReference>
<dbReference type="InterPro" id="IPR018264">
    <property type="entry name" value="Ribosomal_bL33_CS"/>
</dbReference>
<dbReference type="InterPro" id="IPR038584">
    <property type="entry name" value="Ribosomal_bL33_sf"/>
</dbReference>
<dbReference type="InterPro" id="IPR011332">
    <property type="entry name" value="Ribosomal_zn-bd"/>
</dbReference>
<dbReference type="NCBIfam" id="NF001860">
    <property type="entry name" value="PRK00595.1"/>
    <property type="match status" value="1"/>
</dbReference>
<dbReference type="NCBIfam" id="TIGR01023">
    <property type="entry name" value="rpmG_bact"/>
    <property type="match status" value="1"/>
</dbReference>
<dbReference type="PANTHER" id="PTHR15238">
    <property type="entry name" value="54S RIBOSOMAL PROTEIN L39, MITOCHONDRIAL"/>
    <property type="match status" value="1"/>
</dbReference>
<dbReference type="PANTHER" id="PTHR15238:SF1">
    <property type="entry name" value="LARGE RIBOSOMAL SUBUNIT PROTEIN BL33M"/>
    <property type="match status" value="1"/>
</dbReference>
<dbReference type="Pfam" id="PF00471">
    <property type="entry name" value="Ribosomal_L33"/>
    <property type="match status" value="1"/>
</dbReference>
<dbReference type="SUPFAM" id="SSF57829">
    <property type="entry name" value="Zn-binding ribosomal proteins"/>
    <property type="match status" value="1"/>
</dbReference>
<dbReference type="PROSITE" id="PS00582">
    <property type="entry name" value="RIBOSOMAL_L33"/>
    <property type="match status" value="1"/>
</dbReference>
<protein>
    <recommendedName>
        <fullName evidence="1">Large ribosomal subunit protein bL33</fullName>
    </recommendedName>
    <alternativeName>
        <fullName evidence="2">50S ribosomal protein L33</fullName>
    </alternativeName>
</protein>
<keyword id="KW-0687">Ribonucleoprotein</keyword>
<keyword id="KW-0689">Ribosomal protein</keyword>
<organism>
    <name type="scientific">Aeromonas salmonicida (strain A449)</name>
    <dbReference type="NCBI Taxonomy" id="382245"/>
    <lineage>
        <taxon>Bacteria</taxon>
        <taxon>Pseudomonadati</taxon>
        <taxon>Pseudomonadota</taxon>
        <taxon>Gammaproteobacteria</taxon>
        <taxon>Aeromonadales</taxon>
        <taxon>Aeromonadaceae</taxon>
        <taxon>Aeromonas</taxon>
    </lineage>
</organism>
<gene>
    <name evidence="1" type="primary">rpmG</name>
    <name type="ordered locus">ASA_4227</name>
</gene>
<proteinExistence type="inferred from homology"/>
<evidence type="ECO:0000255" key="1">
    <source>
        <dbReference type="HAMAP-Rule" id="MF_00294"/>
    </source>
</evidence>
<evidence type="ECO:0000305" key="2"/>
<reference key="1">
    <citation type="journal article" date="2008" name="BMC Genomics">
        <title>The genome of Aeromonas salmonicida subsp. salmonicida A449: insights into the evolution of a fish pathogen.</title>
        <authorList>
            <person name="Reith M.E."/>
            <person name="Singh R.K."/>
            <person name="Curtis B."/>
            <person name="Boyd J.M."/>
            <person name="Bouevitch A."/>
            <person name="Kimball J."/>
            <person name="Munholland J."/>
            <person name="Murphy C."/>
            <person name="Sarty D."/>
            <person name="Williams J."/>
            <person name="Nash J.H."/>
            <person name="Johnson S.C."/>
            <person name="Brown L.L."/>
        </authorList>
    </citation>
    <scope>NUCLEOTIDE SEQUENCE [LARGE SCALE GENOMIC DNA]</scope>
    <source>
        <strain>A449</strain>
    </source>
</reference>
<comment type="similarity">
    <text evidence="1">Belongs to the bacterial ribosomal protein bL33 family.</text>
</comment>
<name>RL33_AERS4</name>
<accession>A4STD3</accession>
<sequence>MAKGIREKIRLNSSAGTGHFYTTTKNKRTMPEKMEIKKFDPVVRQHVIYKEGKIK</sequence>